<dbReference type="EC" id="3.4.16.-"/>
<dbReference type="EMBL" id="AF027868">
    <property type="protein sequence ID" value="AAB84435.1"/>
    <property type="molecule type" value="Genomic_DNA"/>
</dbReference>
<dbReference type="EMBL" id="AL009126">
    <property type="protein sequence ID" value="CAB13809.1"/>
    <property type="molecule type" value="Genomic_DNA"/>
</dbReference>
<dbReference type="PIR" id="A69901">
    <property type="entry name" value="A69901"/>
</dbReference>
<dbReference type="RefSeq" id="NP_389798.1">
    <property type="nucleotide sequence ID" value="NC_000964.3"/>
</dbReference>
<dbReference type="RefSeq" id="WP_004399250.1">
    <property type="nucleotide sequence ID" value="NZ_OZ025638.1"/>
</dbReference>
<dbReference type="SMR" id="O35046"/>
<dbReference type="FunCoup" id="O35046">
    <property type="interactions" value="23"/>
</dbReference>
<dbReference type="STRING" id="224308.BSU19170"/>
<dbReference type="MEROPS" id="S66.003"/>
<dbReference type="jPOST" id="O35046"/>
<dbReference type="PaxDb" id="224308-BSU19170"/>
<dbReference type="EnsemblBacteria" id="CAB13809">
    <property type="protein sequence ID" value="CAB13809"/>
    <property type="gene ID" value="BSU_19170"/>
</dbReference>
<dbReference type="GeneID" id="939659"/>
<dbReference type="KEGG" id="bsu:BSU19170"/>
<dbReference type="PATRIC" id="fig|224308.179.peg.2095"/>
<dbReference type="eggNOG" id="COG1619">
    <property type="taxonomic scope" value="Bacteria"/>
</dbReference>
<dbReference type="InParanoid" id="O35046"/>
<dbReference type="OrthoDB" id="9807329at2"/>
<dbReference type="PhylomeDB" id="O35046"/>
<dbReference type="BioCyc" id="BSUB:BSU19170-MONOMER"/>
<dbReference type="Proteomes" id="UP000001570">
    <property type="component" value="Chromosome"/>
</dbReference>
<dbReference type="GO" id="GO:0005829">
    <property type="term" value="C:cytosol"/>
    <property type="evidence" value="ECO:0000318"/>
    <property type="project" value="GO_Central"/>
</dbReference>
<dbReference type="GO" id="GO:0004180">
    <property type="term" value="F:carboxypeptidase activity"/>
    <property type="evidence" value="ECO:0000318"/>
    <property type="project" value="GO_Central"/>
</dbReference>
<dbReference type="GO" id="GO:0008236">
    <property type="term" value="F:serine-type peptidase activity"/>
    <property type="evidence" value="ECO:0007669"/>
    <property type="project" value="UniProtKB-KW"/>
</dbReference>
<dbReference type="GO" id="GO:0006508">
    <property type="term" value="P:proteolysis"/>
    <property type="evidence" value="ECO:0007669"/>
    <property type="project" value="UniProtKB-KW"/>
</dbReference>
<dbReference type="CDD" id="cd07062">
    <property type="entry name" value="Peptidase_S66_mccF_like"/>
    <property type="match status" value="1"/>
</dbReference>
<dbReference type="Gene3D" id="3.40.50.10740">
    <property type="entry name" value="Class I glutamine amidotransferase-like"/>
    <property type="match status" value="1"/>
</dbReference>
<dbReference type="Gene3D" id="3.50.30.60">
    <property type="entry name" value="LD-carboxypeptidase A C-terminal domain-like"/>
    <property type="match status" value="1"/>
</dbReference>
<dbReference type="InterPro" id="IPR027461">
    <property type="entry name" value="Carboxypeptidase_A_C_sf"/>
</dbReference>
<dbReference type="InterPro" id="IPR029062">
    <property type="entry name" value="Class_I_gatase-like"/>
</dbReference>
<dbReference type="InterPro" id="IPR027478">
    <property type="entry name" value="LdcA_N"/>
</dbReference>
<dbReference type="InterPro" id="IPR040449">
    <property type="entry name" value="Peptidase_S66_N"/>
</dbReference>
<dbReference type="InterPro" id="IPR040921">
    <property type="entry name" value="Peptidase_S66C"/>
</dbReference>
<dbReference type="InterPro" id="IPR003507">
    <property type="entry name" value="S66_fam"/>
</dbReference>
<dbReference type="PANTHER" id="PTHR30237:SF6">
    <property type="entry name" value="CARBOXYPEPTIDASE YOCD-RELATED"/>
    <property type="match status" value="1"/>
</dbReference>
<dbReference type="PANTHER" id="PTHR30237">
    <property type="entry name" value="MURAMOYLTETRAPEPTIDE CARBOXYPEPTIDASE"/>
    <property type="match status" value="1"/>
</dbReference>
<dbReference type="Pfam" id="PF02016">
    <property type="entry name" value="Peptidase_S66"/>
    <property type="match status" value="1"/>
</dbReference>
<dbReference type="Pfam" id="PF17676">
    <property type="entry name" value="Peptidase_S66C"/>
    <property type="match status" value="1"/>
</dbReference>
<dbReference type="PIRSF" id="PIRSF028757">
    <property type="entry name" value="LD-carboxypeptidase"/>
    <property type="match status" value="1"/>
</dbReference>
<dbReference type="SUPFAM" id="SSF52317">
    <property type="entry name" value="Class I glutamine amidotransferase-like"/>
    <property type="match status" value="1"/>
</dbReference>
<dbReference type="SUPFAM" id="SSF141986">
    <property type="entry name" value="LD-carboxypeptidase A C-terminal domain-like"/>
    <property type="match status" value="1"/>
</dbReference>
<protein>
    <recommendedName>
        <fullName>Putative carboxypeptidase YocD</fullName>
        <ecNumber>3.4.16.-</ecNumber>
    </recommendedName>
</protein>
<reference key="1">
    <citation type="submission" date="1997-11" db="EMBL/GenBank/DDBJ databases">
        <title>Sequence analysis of the Bacillus subtilis chromosome region between the terC and odhAB loci cloned in a yeast artificial chromosome.</title>
        <authorList>
            <person name="Lapidus A."/>
            <person name="Galleron N."/>
            <person name="Sorokin A."/>
            <person name="Ehrlich S.D."/>
        </authorList>
    </citation>
    <scope>NUCLEOTIDE SEQUENCE [GENOMIC DNA]</scope>
</reference>
<reference key="2">
    <citation type="journal article" date="1997" name="Nature">
        <title>The complete genome sequence of the Gram-positive bacterium Bacillus subtilis.</title>
        <authorList>
            <person name="Kunst F."/>
            <person name="Ogasawara N."/>
            <person name="Moszer I."/>
            <person name="Albertini A.M."/>
            <person name="Alloni G."/>
            <person name="Azevedo V."/>
            <person name="Bertero M.G."/>
            <person name="Bessieres P."/>
            <person name="Bolotin A."/>
            <person name="Borchert S."/>
            <person name="Borriss R."/>
            <person name="Boursier L."/>
            <person name="Brans A."/>
            <person name="Braun M."/>
            <person name="Brignell S.C."/>
            <person name="Bron S."/>
            <person name="Brouillet S."/>
            <person name="Bruschi C.V."/>
            <person name="Caldwell B."/>
            <person name="Capuano V."/>
            <person name="Carter N.M."/>
            <person name="Choi S.-K."/>
            <person name="Codani J.-J."/>
            <person name="Connerton I.F."/>
            <person name="Cummings N.J."/>
            <person name="Daniel R.A."/>
            <person name="Denizot F."/>
            <person name="Devine K.M."/>
            <person name="Duesterhoeft A."/>
            <person name="Ehrlich S.D."/>
            <person name="Emmerson P.T."/>
            <person name="Entian K.-D."/>
            <person name="Errington J."/>
            <person name="Fabret C."/>
            <person name="Ferrari E."/>
            <person name="Foulger D."/>
            <person name="Fritz C."/>
            <person name="Fujita M."/>
            <person name="Fujita Y."/>
            <person name="Fuma S."/>
            <person name="Galizzi A."/>
            <person name="Galleron N."/>
            <person name="Ghim S.-Y."/>
            <person name="Glaser P."/>
            <person name="Goffeau A."/>
            <person name="Golightly E.J."/>
            <person name="Grandi G."/>
            <person name="Guiseppi G."/>
            <person name="Guy B.J."/>
            <person name="Haga K."/>
            <person name="Haiech J."/>
            <person name="Harwood C.R."/>
            <person name="Henaut A."/>
            <person name="Hilbert H."/>
            <person name="Holsappel S."/>
            <person name="Hosono S."/>
            <person name="Hullo M.-F."/>
            <person name="Itaya M."/>
            <person name="Jones L.-M."/>
            <person name="Joris B."/>
            <person name="Karamata D."/>
            <person name="Kasahara Y."/>
            <person name="Klaerr-Blanchard M."/>
            <person name="Klein C."/>
            <person name="Kobayashi Y."/>
            <person name="Koetter P."/>
            <person name="Koningstein G."/>
            <person name="Krogh S."/>
            <person name="Kumano M."/>
            <person name="Kurita K."/>
            <person name="Lapidus A."/>
            <person name="Lardinois S."/>
            <person name="Lauber J."/>
            <person name="Lazarevic V."/>
            <person name="Lee S.-M."/>
            <person name="Levine A."/>
            <person name="Liu H."/>
            <person name="Masuda S."/>
            <person name="Mauel C."/>
            <person name="Medigue C."/>
            <person name="Medina N."/>
            <person name="Mellado R.P."/>
            <person name="Mizuno M."/>
            <person name="Moestl D."/>
            <person name="Nakai S."/>
            <person name="Noback M."/>
            <person name="Noone D."/>
            <person name="O'Reilly M."/>
            <person name="Ogawa K."/>
            <person name="Ogiwara A."/>
            <person name="Oudega B."/>
            <person name="Park S.-H."/>
            <person name="Parro V."/>
            <person name="Pohl T.M."/>
            <person name="Portetelle D."/>
            <person name="Porwollik S."/>
            <person name="Prescott A.M."/>
            <person name="Presecan E."/>
            <person name="Pujic P."/>
            <person name="Purnelle B."/>
            <person name="Rapoport G."/>
            <person name="Rey M."/>
            <person name="Reynolds S."/>
            <person name="Rieger M."/>
            <person name="Rivolta C."/>
            <person name="Rocha E."/>
            <person name="Roche B."/>
            <person name="Rose M."/>
            <person name="Sadaie Y."/>
            <person name="Sato T."/>
            <person name="Scanlan E."/>
            <person name="Schleich S."/>
            <person name="Schroeter R."/>
            <person name="Scoffone F."/>
            <person name="Sekiguchi J."/>
            <person name="Sekowska A."/>
            <person name="Seror S.J."/>
            <person name="Serror P."/>
            <person name="Shin B.-S."/>
            <person name="Soldo B."/>
            <person name="Sorokin A."/>
            <person name="Tacconi E."/>
            <person name="Takagi T."/>
            <person name="Takahashi H."/>
            <person name="Takemaru K."/>
            <person name="Takeuchi M."/>
            <person name="Tamakoshi A."/>
            <person name="Tanaka T."/>
            <person name="Terpstra P."/>
            <person name="Tognoni A."/>
            <person name="Tosato V."/>
            <person name="Uchiyama S."/>
            <person name="Vandenbol M."/>
            <person name="Vannier F."/>
            <person name="Vassarotti A."/>
            <person name="Viari A."/>
            <person name="Wambutt R."/>
            <person name="Wedler E."/>
            <person name="Wedler H."/>
            <person name="Weitzenegger T."/>
            <person name="Winters P."/>
            <person name="Wipat A."/>
            <person name="Yamamoto H."/>
            <person name="Yamane K."/>
            <person name="Yasumoto K."/>
            <person name="Yata K."/>
            <person name="Yoshida K."/>
            <person name="Yoshikawa H.-F."/>
            <person name="Zumstein E."/>
            <person name="Yoshikawa H."/>
            <person name="Danchin A."/>
        </authorList>
    </citation>
    <scope>NUCLEOTIDE SEQUENCE [LARGE SCALE GENOMIC DNA]</scope>
    <source>
        <strain>168</strain>
    </source>
</reference>
<organism>
    <name type="scientific">Bacillus subtilis (strain 168)</name>
    <dbReference type="NCBI Taxonomy" id="224308"/>
    <lineage>
        <taxon>Bacteria</taxon>
        <taxon>Bacillati</taxon>
        <taxon>Bacillota</taxon>
        <taxon>Bacilli</taxon>
        <taxon>Bacillales</taxon>
        <taxon>Bacillaceae</taxon>
        <taxon>Bacillus</taxon>
    </lineage>
</organism>
<keyword id="KW-0121">Carboxypeptidase</keyword>
<keyword id="KW-0378">Hydrolase</keyword>
<keyword id="KW-0645">Protease</keyword>
<keyword id="KW-1185">Reference proteome</keyword>
<keyword id="KW-0720">Serine protease</keyword>
<evidence type="ECO:0000250" key="1"/>
<evidence type="ECO:0000305" key="2"/>
<name>YOCD_BACSU</name>
<accession>O35046</accession>
<sequence length="325" mass="36410">MYASKLKKGDEIRIVSPATSMSILSNEAKIQAKTALERLGYRVTIAEHANECNEFDSSSIESRVHDLHAAFFDPGVKAILTTLGGFNSNQLLRYLDYEKIKRHPKILCGYSDITALCNAIYQKTGLVTYSGPHFSTFAMKKGLDYTEEYFLSCCASDDPFEIHPSSEWSDDRWFLDQENRRFYPNNGPVVIQEGYAEGTLIGGNLCTLNLLQGTEYFPETEHTILLIEDDYMSDIHMFDRDLQSLIHLPAFSHVKAILIGRFQKASNVSIDLVKAMIETKKELSGIPIIANINAGHTSPIATFPIGGTCRIEAISGTSRIWIDKH</sequence>
<gene>
    <name type="primary">yocD</name>
    <name type="ordered locus">BSU19170</name>
</gene>
<proteinExistence type="inferred from homology"/>
<feature type="chain" id="PRO_0000172842" description="Putative carboxypeptidase YocD">
    <location>
        <begin position="1"/>
        <end position="325"/>
    </location>
</feature>
<feature type="active site" description="Nucleophile" evidence="1">
    <location>
        <position position="111"/>
    </location>
</feature>
<feature type="active site" description="Charge relay system" evidence="1">
    <location>
        <position position="228"/>
    </location>
</feature>
<feature type="active site" description="Charge relay system" evidence="1">
    <location>
        <position position="296"/>
    </location>
</feature>
<comment type="similarity">
    <text evidence="2">Belongs to the peptidase S66 family.</text>
</comment>